<gene>
    <name evidence="1" type="primary">grpE</name>
    <name type="ordered locus">SpyM3_1532</name>
</gene>
<reference key="1">
    <citation type="journal article" date="2002" name="Proc. Natl. Acad. Sci. U.S.A.">
        <title>Genome sequence of a serotype M3 strain of group A Streptococcus: phage-encoded toxins, the high-virulence phenotype, and clone emergence.</title>
        <authorList>
            <person name="Beres S.B."/>
            <person name="Sylva G.L."/>
            <person name="Barbian K.D."/>
            <person name="Lei B."/>
            <person name="Hoff J.S."/>
            <person name="Mammarella N.D."/>
            <person name="Liu M.-Y."/>
            <person name="Smoot J.C."/>
            <person name="Porcella S.F."/>
            <person name="Parkins L.D."/>
            <person name="Campbell D.S."/>
            <person name="Smith T.M."/>
            <person name="McCormick J.K."/>
            <person name="Leung D.Y.M."/>
            <person name="Schlievert P.M."/>
            <person name="Musser J.M."/>
        </authorList>
    </citation>
    <scope>NUCLEOTIDE SEQUENCE [LARGE SCALE GENOMIC DNA]</scope>
    <source>
        <strain>ATCC BAA-595 / MGAS315</strain>
    </source>
</reference>
<dbReference type="EMBL" id="AE014074">
    <property type="protein sequence ID" value="AAM80139.1"/>
    <property type="molecule type" value="Genomic_DNA"/>
</dbReference>
<dbReference type="RefSeq" id="WP_002983313.1">
    <property type="nucleotide sequence ID" value="NC_004070.1"/>
</dbReference>
<dbReference type="SMR" id="P0DB48"/>
<dbReference type="GeneID" id="69900393"/>
<dbReference type="KEGG" id="spg:SpyM3_1532"/>
<dbReference type="HOGENOM" id="CLU_057217_6_3_9"/>
<dbReference type="Proteomes" id="UP000000564">
    <property type="component" value="Chromosome"/>
</dbReference>
<dbReference type="GO" id="GO:0005737">
    <property type="term" value="C:cytoplasm"/>
    <property type="evidence" value="ECO:0007669"/>
    <property type="project" value="UniProtKB-SubCell"/>
</dbReference>
<dbReference type="GO" id="GO:0000774">
    <property type="term" value="F:adenyl-nucleotide exchange factor activity"/>
    <property type="evidence" value="ECO:0007669"/>
    <property type="project" value="InterPro"/>
</dbReference>
<dbReference type="GO" id="GO:0042803">
    <property type="term" value="F:protein homodimerization activity"/>
    <property type="evidence" value="ECO:0007669"/>
    <property type="project" value="InterPro"/>
</dbReference>
<dbReference type="GO" id="GO:0051087">
    <property type="term" value="F:protein-folding chaperone binding"/>
    <property type="evidence" value="ECO:0007669"/>
    <property type="project" value="InterPro"/>
</dbReference>
<dbReference type="GO" id="GO:0051082">
    <property type="term" value="F:unfolded protein binding"/>
    <property type="evidence" value="ECO:0007669"/>
    <property type="project" value="TreeGrafter"/>
</dbReference>
<dbReference type="GO" id="GO:0006457">
    <property type="term" value="P:protein folding"/>
    <property type="evidence" value="ECO:0007669"/>
    <property type="project" value="InterPro"/>
</dbReference>
<dbReference type="CDD" id="cd00446">
    <property type="entry name" value="GrpE"/>
    <property type="match status" value="1"/>
</dbReference>
<dbReference type="Gene3D" id="3.90.20.20">
    <property type="match status" value="1"/>
</dbReference>
<dbReference type="Gene3D" id="2.30.22.10">
    <property type="entry name" value="Head domain of nucleotide exchange factor GrpE"/>
    <property type="match status" value="1"/>
</dbReference>
<dbReference type="HAMAP" id="MF_01151">
    <property type="entry name" value="GrpE"/>
    <property type="match status" value="1"/>
</dbReference>
<dbReference type="InterPro" id="IPR000740">
    <property type="entry name" value="GrpE"/>
</dbReference>
<dbReference type="InterPro" id="IPR013805">
    <property type="entry name" value="GrpE_coiled_coil"/>
</dbReference>
<dbReference type="InterPro" id="IPR009012">
    <property type="entry name" value="GrpE_head"/>
</dbReference>
<dbReference type="NCBIfam" id="NF010738">
    <property type="entry name" value="PRK14140.1"/>
    <property type="match status" value="1"/>
</dbReference>
<dbReference type="NCBIfam" id="NF010753">
    <property type="entry name" value="PRK14156.1"/>
    <property type="match status" value="1"/>
</dbReference>
<dbReference type="PANTHER" id="PTHR21237">
    <property type="entry name" value="GRPE PROTEIN"/>
    <property type="match status" value="1"/>
</dbReference>
<dbReference type="PANTHER" id="PTHR21237:SF23">
    <property type="entry name" value="GRPE PROTEIN HOMOLOG, MITOCHONDRIAL"/>
    <property type="match status" value="1"/>
</dbReference>
<dbReference type="Pfam" id="PF01025">
    <property type="entry name" value="GrpE"/>
    <property type="match status" value="1"/>
</dbReference>
<dbReference type="PRINTS" id="PR00773">
    <property type="entry name" value="GRPEPROTEIN"/>
</dbReference>
<dbReference type="SUPFAM" id="SSF58014">
    <property type="entry name" value="Coiled-coil domain of nucleotide exchange factor GrpE"/>
    <property type="match status" value="1"/>
</dbReference>
<dbReference type="SUPFAM" id="SSF51064">
    <property type="entry name" value="Head domain of nucleotide exchange factor GrpE"/>
    <property type="match status" value="1"/>
</dbReference>
<dbReference type="PROSITE" id="PS01071">
    <property type="entry name" value="GRPE"/>
    <property type="match status" value="1"/>
</dbReference>
<feature type="chain" id="PRO_0000113874" description="Protein GrpE">
    <location>
        <begin position="1"/>
        <end position="190"/>
    </location>
</feature>
<feature type="region of interest" description="Disordered" evidence="2">
    <location>
        <begin position="21"/>
        <end position="49"/>
    </location>
</feature>
<feature type="compositionally biased region" description="Acidic residues" evidence="2">
    <location>
        <begin position="23"/>
        <end position="42"/>
    </location>
</feature>
<accession>P0DB48</accession>
<accession>P63192</accession>
<accession>P82581</accession>
<accession>Q99YC8</accession>
<name>GRPE_STRP3</name>
<protein>
    <recommendedName>
        <fullName evidence="1">Protein GrpE</fullName>
    </recommendedName>
    <alternativeName>
        <fullName evidence="1">HSP-70 cofactor</fullName>
    </alternativeName>
</protein>
<organism>
    <name type="scientific">Streptococcus pyogenes serotype M3 (strain ATCC BAA-595 / MGAS315)</name>
    <dbReference type="NCBI Taxonomy" id="198466"/>
    <lineage>
        <taxon>Bacteria</taxon>
        <taxon>Bacillati</taxon>
        <taxon>Bacillota</taxon>
        <taxon>Bacilli</taxon>
        <taxon>Lactobacillales</taxon>
        <taxon>Streptococcaceae</taxon>
        <taxon>Streptococcus</taxon>
    </lineage>
</organism>
<keyword id="KW-0143">Chaperone</keyword>
<keyword id="KW-0963">Cytoplasm</keyword>
<keyword id="KW-0346">Stress response</keyword>
<sequence>MAVFNKLFKRRHSVSEEIKKDDLQEEVEATETEETVEEVIEETPEKSELELANERADEFENKYLRAHAEMQNIQRRSSEERQQLQRYRSQDLAKAILPSLDNLERALAVEGLTDDVKKGLEMTRDSLIQALKEEGVEEVEVDSFDHNFHMAVQTLPADDEHPADSIAEVFQKGYKLHERLLRPAMVVVYN</sequence>
<evidence type="ECO:0000255" key="1">
    <source>
        <dbReference type="HAMAP-Rule" id="MF_01151"/>
    </source>
</evidence>
<evidence type="ECO:0000256" key="2">
    <source>
        <dbReference type="SAM" id="MobiDB-lite"/>
    </source>
</evidence>
<comment type="function">
    <text evidence="1">Participates actively in the response to hyperosmotic and heat shock by preventing the aggregation of stress-denatured proteins, in association with DnaK and GrpE. It is the nucleotide exchange factor for DnaK and may function as a thermosensor. Unfolded proteins bind initially to DnaJ; upon interaction with the DnaJ-bound protein, DnaK hydrolyzes its bound ATP, resulting in the formation of a stable complex. GrpE releases ADP from DnaK; ATP binding to DnaK triggers the release of the substrate protein, thus completing the reaction cycle. Several rounds of ATP-dependent interactions between DnaJ, DnaK and GrpE are required for fully efficient folding.</text>
</comment>
<comment type="subunit">
    <text evidence="1">Homodimer.</text>
</comment>
<comment type="subcellular location">
    <subcellularLocation>
        <location evidence="1">Cytoplasm</location>
    </subcellularLocation>
</comment>
<comment type="similarity">
    <text evidence="1">Belongs to the GrpE family.</text>
</comment>
<proteinExistence type="inferred from homology"/>